<reference key="1">
    <citation type="journal article" date="2000" name="Nucleic Acids Res.">
        <title>Complete genome sequence of the alkaliphilic bacterium Bacillus halodurans and genomic sequence comparison with Bacillus subtilis.</title>
        <authorList>
            <person name="Takami H."/>
            <person name="Nakasone K."/>
            <person name="Takaki Y."/>
            <person name="Maeno G."/>
            <person name="Sasaki R."/>
            <person name="Masui N."/>
            <person name="Fuji F."/>
            <person name="Hirama C."/>
            <person name="Nakamura Y."/>
            <person name="Ogasawara N."/>
            <person name="Kuhara S."/>
            <person name="Horikoshi K."/>
        </authorList>
    </citation>
    <scope>NUCLEOTIDE SEQUENCE [LARGE SCALE GENOMIC DNA]</scope>
    <source>
        <strain>ATCC BAA-125 / DSM 18197 / FERM 7344 / JCM 9153 / C-125</strain>
    </source>
</reference>
<dbReference type="EMBL" id="BA000004">
    <property type="protein sequence ID" value="BAB04933.1"/>
    <property type="molecule type" value="Genomic_DNA"/>
</dbReference>
<dbReference type="PIR" id="F83801">
    <property type="entry name" value="F83801"/>
</dbReference>
<dbReference type="RefSeq" id="WP_010897382.1">
    <property type="nucleotide sequence ID" value="NC_002570.2"/>
</dbReference>
<dbReference type="SMR" id="Q9KDJ9"/>
<dbReference type="STRING" id="272558.gene:10727108"/>
<dbReference type="KEGG" id="bha:BH1214"/>
<dbReference type="eggNOG" id="COG4492">
    <property type="taxonomic scope" value="Bacteria"/>
</dbReference>
<dbReference type="HOGENOM" id="CLU_128147_0_0_9"/>
<dbReference type="OrthoDB" id="9788773at2"/>
<dbReference type="Proteomes" id="UP000001258">
    <property type="component" value="Chromosome"/>
</dbReference>
<dbReference type="CDD" id="cd04888">
    <property type="entry name" value="ACT_PheB-BS"/>
    <property type="match status" value="1"/>
</dbReference>
<dbReference type="Gene3D" id="3.30.70.260">
    <property type="match status" value="1"/>
</dbReference>
<dbReference type="HAMAP" id="MF_00707">
    <property type="entry name" value="UPF0735"/>
    <property type="match status" value="1"/>
</dbReference>
<dbReference type="InterPro" id="IPR045865">
    <property type="entry name" value="ACT-like_dom_sf"/>
</dbReference>
<dbReference type="InterPro" id="IPR002912">
    <property type="entry name" value="ACT_dom"/>
</dbReference>
<dbReference type="InterPro" id="IPR008310">
    <property type="entry name" value="UPF0735_ACT_dom-cont"/>
</dbReference>
<dbReference type="NCBIfam" id="NF003361">
    <property type="entry name" value="PRK04435.1"/>
    <property type="match status" value="1"/>
</dbReference>
<dbReference type="PIRSF" id="PIRSF025624">
    <property type="entry name" value="ACT_PheB"/>
    <property type="match status" value="1"/>
</dbReference>
<dbReference type="SUPFAM" id="SSF55021">
    <property type="entry name" value="ACT-like"/>
    <property type="match status" value="1"/>
</dbReference>
<dbReference type="PROSITE" id="PS51671">
    <property type="entry name" value="ACT"/>
    <property type="match status" value="1"/>
</dbReference>
<gene>
    <name type="ordered locus">BH1214</name>
</gene>
<comment type="similarity">
    <text evidence="1">Belongs to the UPF0735 family.</text>
</comment>
<organism>
    <name type="scientific">Halalkalibacterium halodurans (strain ATCC BAA-125 / DSM 18197 / FERM 7344 / JCM 9153 / C-125)</name>
    <name type="common">Bacillus halodurans</name>
    <dbReference type="NCBI Taxonomy" id="272558"/>
    <lineage>
        <taxon>Bacteria</taxon>
        <taxon>Bacillati</taxon>
        <taxon>Bacillota</taxon>
        <taxon>Bacilli</taxon>
        <taxon>Bacillales</taxon>
        <taxon>Bacillaceae</taxon>
        <taxon>Halalkalibacterium (ex Joshi et al. 2022)</taxon>
    </lineage>
</organism>
<evidence type="ECO:0000255" key="1">
    <source>
        <dbReference type="HAMAP-Rule" id="MF_00707"/>
    </source>
</evidence>
<protein>
    <recommendedName>
        <fullName evidence="1">UPF0735 ACT domain-containing protein BH1214</fullName>
    </recommendedName>
</protein>
<name>Y1214_HALH5</name>
<feature type="chain" id="PRO_0000206466" description="UPF0735 ACT domain-containing protein BH1214">
    <location>
        <begin position="1"/>
        <end position="147"/>
    </location>
</feature>
<feature type="domain" description="ACT" evidence="1">
    <location>
        <begin position="70"/>
        <end position="145"/>
    </location>
</feature>
<accession>Q9KDJ9</accession>
<sequence>MTRKKFYLVREDMLTEAMQKTLEAKALLESGKKRKINEAVHEVGLSRSAFYKYKDGVFPFHTMTKEKIITLSINLEDRSGSLSAMLATVAEAEANVLTINQTIPLQGRANITLSIDTATMSLEIDELVEKIESMEAVEKVELVGSGS</sequence>
<keyword id="KW-1185">Reference proteome</keyword>
<proteinExistence type="inferred from homology"/>